<dbReference type="EC" id="2.1.1.228" evidence="1"/>
<dbReference type="EMBL" id="CU329670">
    <property type="protein sequence ID" value="CAK9838650.1"/>
    <property type="molecule type" value="Genomic_DNA"/>
</dbReference>
<dbReference type="RefSeq" id="NP_001018269.2">
    <property type="nucleotide sequence ID" value="NM_001019824.3"/>
</dbReference>
<dbReference type="SMR" id="Q8TFG7"/>
<dbReference type="BioGRID" id="280505">
    <property type="interactions" value="2"/>
</dbReference>
<dbReference type="FunCoup" id="Q8TFG7">
    <property type="interactions" value="398"/>
</dbReference>
<dbReference type="STRING" id="284812.Q8TFG7"/>
<dbReference type="iPTMnet" id="Q8TFG7"/>
<dbReference type="PaxDb" id="4896-SPAPB18E9.01.1"/>
<dbReference type="EnsemblFungi" id="SPAPB18E9.01.1">
    <property type="protein sequence ID" value="SPAPB18E9.01.1:pep"/>
    <property type="gene ID" value="SPAPB18E9.01"/>
</dbReference>
<dbReference type="GeneID" id="3361429"/>
<dbReference type="KEGG" id="spo:3361429"/>
<dbReference type="PomBase" id="SPAPB18E9.01">
    <property type="gene designation" value="trm5"/>
</dbReference>
<dbReference type="VEuPathDB" id="FungiDB:SPAPB18E9.01"/>
<dbReference type="eggNOG" id="KOG2078">
    <property type="taxonomic scope" value="Eukaryota"/>
</dbReference>
<dbReference type="HOGENOM" id="CLU_022610_2_2_1"/>
<dbReference type="InParanoid" id="Q8TFG7"/>
<dbReference type="OMA" id="VGSHSQF"/>
<dbReference type="PhylomeDB" id="Q8TFG7"/>
<dbReference type="PRO" id="PR:Q8TFG7"/>
<dbReference type="Proteomes" id="UP000002485">
    <property type="component" value="Chromosome I"/>
</dbReference>
<dbReference type="GO" id="GO:0005737">
    <property type="term" value="C:cytoplasm"/>
    <property type="evidence" value="ECO:0000318"/>
    <property type="project" value="GO_Central"/>
</dbReference>
<dbReference type="GO" id="GO:0005759">
    <property type="term" value="C:mitochondrial matrix"/>
    <property type="evidence" value="ECO:0007669"/>
    <property type="project" value="UniProtKB-UniRule"/>
</dbReference>
<dbReference type="GO" id="GO:0005634">
    <property type="term" value="C:nucleus"/>
    <property type="evidence" value="ECO:0007669"/>
    <property type="project" value="UniProtKB-UniRule"/>
</dbReference>
<dbReference type="GO" id="GO:0052906">
    <property type="term" value="F:tRNA (guanine(37)-N1)-methyltransferase activity"/>
    <property type="evidence" value="ECO:0007669"/>
    <property type="project" value="UniProtKB-UniRule"/>
</dbReference>
<dbReference type="GO" id="GO:0008175">
    <property type="term" value="F:tRNA methyltransferase activity"/>
    <property type="evidence" value="ECO:0000318"/>
    <property type="project" value="GO_Central"/>
</dbReference>
<dbReference type="GO" id="GO:0070901">
    <property type="term" value="P:mitochondrial tRNA methylation"/>
    <property type="evidence" value="ECO:0000318"/>
    <property type="project" value="GO_Central"/>
</dbReference>
<dbReference type="GO" id="GO:0030488">
    <property type="term" value="P:tRNA methylation"/>
    <property type="evidence" value="ECO:0007669"/>
    <property type="project" value="UniProtKB-UniRule"/>
</dbReference>
<dbReference type="GO" id="GO:0002939">
    <property type="term" value="P:tRNA N1-guanine methylation"/>
    <property type="evidence" value="ECO:0000318"/>
    <property type="project" value="GO_Central"/>
</dbReference>
<dbReference type="FunFam" id="3.30.300.110:FF:000001">
    <property type="entry name" value="tRNA (guanine(37)-N1)-methyltransferase"/>
    <property type="match status" value="1"/>
</dbReference>
<dbReference type="Gene3D" id="3.30.300.110">
    <property type="entry name" value="Met-10+ protein-like domains"/>
    <property type="match status" value="1"/>
</dbReference>
<dbReference type="Gene3D" id="3.40.50.150">
    <property type="entry name" value="Vaccinia Virus protein VP39"/>
    <property type="match status" value="1"/>
</dbReference>
<dbReference type="HAMAP" id="MF_03152">
    <property type="entry name" value="TRM5"/>
    <property type="match status" value="1"/>
</dbReference>
<dbReference type="InterPro" id="IPR030382">
    <property type="entry name" value="MeTrfase_TRM5/TYW2"/>
</dbReference>
<dbReference type="InterPro" id="IPR029063">
    <property type="entry name" value="SAM-dependent_MTases_sf"/>
</dbReference>
<dbReference type="InterPro" id="IPR056743">
    <property type="entry name" value="TRM5-TYW2-like_MTfase"/>
</dbReference>
<dbReference type="InterPro" id="IPR056744">
    <property type="entry name" value="TRM5/TYW2-like_N"/>
</dbReference>
<dbReference type="InterPro" id="IPR025792">
    <property type="entry name" value="tRNA_Gua_MeTrfase_euk"/>
</dbReference>
<dbReference type="PANTHER" id="PTHR23245:SF36">
    <property type="entry name" value="TRNA (GUANINE(37)-N1)-METHYLTRANSFERASE"/>
    <property type="match status" value="1"/>
</dbReference>
<dbReference type="PANTHER" id="PTHR23245">
    <property type="entry name" value="TRNA METHYLTRANSFERASE"/>
    <property type="match status" value="1"/>
</dbReference>
<dbReference type="Pfam" id="PF02475">
    <property type="entry name" value="TRM5-TYW2_MTfase"/>
    <property type="match status" value="1"/>
</dbReference>
<dbReference type="Pfam" id="PF25133">
    <property type="entry name" value="TYW2_N_2"/>
    <property type="match status" value="1"/>
</dbReference>
<dbReference type="SUPFAM" id="SSF53335">
    <property type="entry name" value="S-adenosyl-L-methionine-dependent methyltransferases"/>
    <property type="match status" value="1"/>
</dbReference>
<dbReference type="PROSITE" id="PS51684">
    <property type="entry name" value="SAM_MT_TRM5_TYW2"/>
    <property type="match status" value="1"/>
</dbReference>
<keyword id="KW-0963">Cytoplasm</keyword>
<keyword id="KW-0489">Methyltransferase</keyword>
<keyword id="KW-0496">Mitochondrion</keyword>
<keyword id="KW-0539">Nucleus</keyword>
<keyword id="KW-1185">Reference proteome</keyword>
<keyword id="KW-0949">S-adenosyl-L-methionine</keyword>
<keyword id="KW-0808">Transferase</keyword>
<keyword id="KW-0819">tRNA processing</keyword>
<sequence>MAELLHPNKVEMKPFLKNLDKNLFKKTYNLVAAKVSPKKVGLLNKVCKKDLLDWPRVKHVYQQNNEKLVLLNRDASLDGTRGLSDATVSFIKENNIELVPFQLTLDYDYWRADDILDAILPPGEKEDHPSGFTAVGHIAHMNLREEWLPYKYIIGKVILDKNPSIETVVNKTDTIDTKFRTFQMEVLAGKDDFIVTQSESNCKFRFDFSKVYWNSRLSTEHDRLIQQFQPGDAVCDVMAGVGPFACPAGKKNVIVFANDLNPYSYESLVENIFLNKVANFVKAFNQDGREFIRSSVQKLLGFSKDEKAITVFPPRKRARKLEENKDPVRQDIPIPPVFSHYVMNLPGSAIEFLDAFKGCYYGLEYLFKDRSLPKVHVHCFCRFPDPEEDLINRIYASLGYRFSPEEVDFYYVRKVAPNKDMYCCTFTLPGSIIFAKPVSG</sequence>
<gene>
    <name type="primary">trm5</name>
    <name evidence="4" type="ORF">SPAPB18E9.01</name>
</gene>
<comment type="function">
    <text evidence="1">Specifically methylates the N1 position of guanosine-37 in various cytoplasmic and mitochondrial tRNAs. Methylation is not dependent on the nature of the nucleoside 5' of the target nucleoside. This is the first step in the biosynthesis of wybutosine (yW), a modified base adjacent to the anticodon of tRNAs and required for accurate decoding.</text>
</comment>
<comment type="catalytic activity">
    <reaction evidence="1">
        <text>guanosine(37) in tRNA + S-adenosyl-L-methionine = N(1)-methylguanosine(37) in tRNA + S-adenosyl-L-homocysteine + H(+)</text>
        <dbReference type="Rhea" id="RHEA:36899"/>
        <dbReference type="Rhea" id="RHEA-COMP:10145"/>
        <dbReference type="Rhea" id="RHEA-COMP:10147"/>
        <dbReference type="ChEBI" id="CHEBI:15378"/>
        <dbReference type="ChEBI" id="CHEBI:57856"/>
        <dbReference type="ChEBI" id="CHEBI:59789"/>
        <dbReference type="ChEBI" id="CHEBI:73542"/>
        <dbReference type="ChEBI" id="CHEBI:74269"/>
        <dbReference type="EC" id="2.1.1.228"/>
    </reaction>
</comment>
<comment type="subunit">
    <text evidence="1">Monomer.</text>
</comment>
<comment type="subcellular location">
    <subcellularLocation>
        <location evidence="1">Mitochondrion matrix</location>
    </subcellularLocation>
    <subcellularLocation>
        <location evidence="1 2">Nucleus</location>
    </subcellularLocation>
    <subcellularLocation>
        <location evidence="1">Cytoplasm</location>
    </subcellularLocation>
    <text evidence="1">Predominantly in the mitochondria and in the nucleus.</text>
</comment>
<comment type="similarity">
    <text evidence="3">Belongs to the class I-like SAM-binding methyltransferase superfamily. TRM5/TYW2 family.</text>
</comment>
<proteinExistence type="inferred from homology"/>
<reference key="1">
    <citation type="journal article" date="2002" name="Nature">
        <title>The genome sequence of Schizosaccharomyces pombe.</title>
        <authorList>
            <person name="Wood V."/>
            <person name="Gwilliam R."/>
            <person name="Rajandream M.A."/>
            <person name="Lyne M.H."/>
            <person name="Lyne R."/>
            <person name="Stewart A."/>
            <person name="Sgouros J.G."/>
            <person name="Peat N."/>
            <person name="Hayles J."/>
            <person name="Baker S.G."/>
            <person name="Basham D."/>
            <person name="Bowman S."/>
            <person name="Brooks K."/>
            <person name="Brown D."/>
            <person name="Brown S."/>
            <person name="Chillingworth T."/>
            <person name="Churcher C.M."/>
            <person name="Collins M."/>
            <person name="Connor R."/>
            <person name="Cronin A."/>
            <person name="Davis P."/>
            <person name="Feltwell T."/>
            <person name="Fraser A."/>
            <person name="Gentles S."/>
            <person name="Goble A."/>
            <person name="Hamlin N."/>
            <person name="Harris D.E."/>
            <person name="Hidalgo J."/>
            <person name="Hodgson G."/>
            <person name="Holroyd S."/>
            <person name="Hornsby T."/>
            <person name="Howarth S."/>
            <person name="Huckle E.J."/>
            <person name="Hunt S."/>
            <person name="Jagels K."/>
            <person name="James K.D."/>
            <person name="Jones L."/>
            <person name="Jones M."/>
            <person name="Leather S."/>
            <person name="McDonald S."/>
            <person name="McLean J."/>
            <person name="Mooney P."/>
            <person name="Moule S."/>
            <person name="Mungall K.L."/>
            <person name="Murphy L.D."/>
            <person name="Niblett D."/>
            <person name="Odell C."/>
            <person name="Oliver K."/>
            <person name="O'Neil S."/>
            <person name="Pearson D."/>
            <person name="Quail M.A."/>
            <person name="Rabbinowitsch E."/>
            <person name="Rutherford K.M."/>
            <person name="Rutter S."/>
            <person name="Saunders D."/>
            <person name="Seeger K."/>
            <person name="Sharp S."/>
            <person name="Skelton J."/>
            <person name="Simmonds M.N."/>
            <person name="Squares R."/>
            <person name="Squares S."/>
            <person name="Stevens K."/>
            <person name="Taylor K."/>
            <person name="Taylor R.G."/>
            <person name="Tivey A."/>
            <person name="Walsh S.V."/>
            <person name="Warren T."/>
            <person name="Whitehead S."/>
            <person name="Woodward J.R."/>
            <person name="Volckaert G."/>
            <person name="Aert R."/>
            <person name="Robben J."/>
            <person name="Grymonprez B."/>
            <person name="Weltjens I."/>
            <person name="Vanstreels E."/>
            <person name="Rieger M."/>
            <person name="Schaefer M."/>
            <person name="Mueller-Auer S."/>
            <person name="Gabel C."/>
            <person name="Fuchs M."/>
            <person name="Duesterhoeft A."/>
            <person name="Fritzc C."/>
            <person name="Holzer E."/>
            <person name="Moestl D."/>
            <person name="Hilbert H."/>
            <person name="Borzym K."/>
            <person name="Langer I."/>
            <person name="Beck A."/>
            <person name="Lehrach H."/>
            <person name="Reinhardt R."/>
            <person name="Pohl T.M."/>
            <person name="Eger P."/>
            <person name="Zimmermann W."/>
            <person name="Wedler H."/>
            <person name="Wambutt R."/>
            <person name="Purnelle B."/>
            <person name="Goffeau A."/>
            <person name="Cadieu E."/>
            <person name="Dreano S."/>
            <person name="Gloux S."/>
            <person name="Lelaure V."/>
            <person name="Mottier S."/>
            <person name="Galibert F."/>
            <person name="Aves S.J."/>
            <person name="Xiang Z."/>
            <person name="Hunt C."/>
            <person name="Moore K."/>
            <person name="Hurst S.M."/>
            <person name="Lucas M."/>
            <person name="Rochet M."/>
            <person name="Gaillardin C."/>
            <person name="Tallada V.A."/>
            <person name="Garzon A."/>
            <person name="Thode G."/>
            <person name="Daga R.R."/>
            <person name="Cruzado L."/>
            <person name="Jimenez J."/>
            <person name="Sanchez M."/>
            <person name="del Rey F."/>
            <person name="Benito J."/>
            <person name="Dominguez A."/>
            <person name="Revuelta J.L."/>
            <person name="Moreno S."/>
            <person name="Armstrong J."/>
            <person name="Forsburg S.L."/>
            <person name="Cerutti L."/>
            <person name="Lowe T."/>
            <person name="McCombie W.R."/>
            <person name="Paulsen I."/>
            <person name="Potashkin J."/>
            <person name="Shpakovski G.V."/>
            <person name="Ussery D."/>
            <person name="Barrell B.G."/>
            <person name="Nurse P."/>
        </authorList>
    </citation>
    <scope>NUCLEOTIDE SEQUENCE [LARGE SCALE GENOMIC DNA]</scope>
    <source>
        <strain>972 / ATCC 24843</strain>
    </source>
</reference>
<reference key="2">
    <citation type="journal article" date="2006" name="Nat. Biotechnol.">
        <title>ORFeome cloning and global analysis of protein localization in the fission yeast Schizosaccharomyces pombe.</title>
        <authorList>
            <person name="Matsuyama A."/>
            <person name="Arai R."/>
            <person name="Yashiroda Y."/>
            <person name="Shirai A."/>
            <person name="Kamata A."/>
            <person name="Sekido S."/>
            <person name="Kobayashi Y."/>
            <person name="Hashimoto A."/>
            <person name="Hamamoto M."/>
            <person name="Hiraoka Y."/>
            <person name="Horinouchi S."/>
            <person name="Yoshida M."/>
        </authorList>
    </citation>
    <scope>SUBCELLULAR LOCATION [LARGE SCALE ANALYSIS]</scope>
</reference>
<accession>Q8TFG7</accession>
<accession>A0AAN2H689</accession>
<feature type="chain" id="PRO_0000316612" description="tRNA (guanine(37)-N(1))-methyltransferase">
    <location>
        <begin position="1"/>
        <end position="440"/>
    </location>
</feature>
<feature type="binding site" evidence="1">
    <location>
        <position position="221"/>
    </location>
    <ligand>
        <name>S-adenosyl-L-methionine</name>
        <dbReference type="ChEBI" id="CHEBI:59789"/>
    </ligand>
</feature>
<feature type="binding site" evidence="1">
    <location>
        <begin position="259"/>
        <end position="260"/>
    </location>
    <ligand>
        <name>S-adenosyl-L-methionine</name>
        <dbReference type="ChEBI" id="CHEBI:59789"/>
    </ligand>
</feature>
<feature type="binding site" evidence="1">
    <location>
        <begin position="287"/>
        <end position="288"/>
    </location>
    <ligand>
        <name>S-adenosyl-L-methionine</name>
        <dbReference type="ChEBI" id="CHEBI:59789"/>
    </ligand>
</feature>
<feature type="binding site" evidence="1">
    <location>
        <position position="344"/>
    </location>
    <ligand>
        <name>S-adenosyl-L-methionine</name>
        <dbReference type="ChEBI" id="CHEBI:59789"/>
    </ligand>
</feature>
<organism>
    <name type="scientific">Schizosaccharomyces pombe (strain 972 / ATCC 24843)</name>
    <name type="common">Fission yeast</name>
    <dbReference type="NCBI Taxonomy" id="284812"/>
    <lineage>
        <taxon>Eukaryota</taxon>
        <taxon>Fungi</taxon>
        <taxon>Dikarya</taxon>
        <taxon>Ascomycota</taxon>
        <taxon>Taphrinomycotina</taxon>
        <taxon>Schizosaccharomycetes</taxon>
        <taxon>Schizosaccharomycetales</taxon>
        <taxon>Schizosaccharomycetaceae</taxon>
        <taxon>Schizosaccharomyces</taxon>
    </lineage>
</organism>
<protein>
    <recommendedName>
        <fullName evidence="1">tRNA (guanine(37)-N(1))-methyltransferase</fullName>
        <ecNumber evidence="1">2.1.1.228</ecNumber>
    </recommendedName>
    <alternativeName>
        <fullName evidence="1">M1G-methyltransferase</fullName>
    </alternativeName>
    <alternativeName>
        <fullName evidence="1">tRNA [GM37] methyltransferase</fullName>
    </alternativeName>
    <alternativeName>
        <fullName evidence="1">tRNA methyltransferase 5</fullName>
    </alternativeName>
</protein>
<evidence type="ECO:0000255" key="1">
    <source>
        <dbReference type="HAMAP-Rule" id="MF_03152"/>
    </source>
</evidence>
<evidence type="ECO:0000269" key="2">
    <source>
    </source>
</evidence>
<evidence type="ECO:0000305" key="3"/>
<evidence type="ECO:0000312" key="4">
    <source>
        <dbReference type="PomBase" id="SPAPB18E9.01"/>
    </source>
</evidence>
<name>TRM5_SCHPO</name>